<accession>Q2KE00</accession>
<comment type="function">
    <text evidence="1">Involved in mRNA degradation. Catalyzes the phosphorolysis of single-stranded polyribonucleotides processively in the 3'- to 5'-direction.</text>
</comment>
<comment type="catalytic activity">
    <reaction evidence="1">
        <text>RNA(n+1) + phosphate = RNA(n) + a ribonucleoside 5'-diphosphate</text>
        <dbReference type="Rhea" id="RHEA:22096"/>
        <dbReference type="Rhea" id="RHEA-COMP:14527"/>
        <dbReference type="Rhea" id="RHEA-COMP:17342"/>
        <dbReference type="ChEBI" id="CHEBI:43474"/>
        <dbReference type="ChEBI" id="CHEBI:57930"/>
        <dbReference type="ChEBI" id="CHEBI:140395"/>
        <dbReference type="EC" id="2.7.7.8"/>
    </reaction>
</comment>
<comment type="cofactor">
    <cofactor evidence="1">
        <name>Mg(2+)</name>
        <dbReference type="ChEBI" id="CHEBI:18420"/>
    </cofactor>
</comment>
<comment type="subcellular location">
    <subcellularLocation>
        <location evidence="1">Cytoplasm</location>
    </subcellularLocation>
</comment>
<comment type="similarity">
    <text evidence="1">Belongs to the polyribonucleotide nucleotidyltransferase family.</text>
</comment>
<evidence type="ECO:0000255" key="1">
    <source>
        <dbReference type="HAMAP-Rule" id="MF_01595"/>
    </source>
</evidence>
<name>PNP_RHIEC</name>
<organism>
    <name type="scientific">Rhizobium etli (strain ATCC 51251 / DSM 11541 / JCM 21823 / NBRC 15573 / CFN 42)</name>
    <dbReference type="NCBI Taxonomy" id="347834"/>
    <lineage>
        <taxon>Bacteria</taxon>
        <taxon>Pseudomonadati</taxon>
        <taxon>Pseudomonadota</taxon>
        <taxon>Alphaproteobacteria</taxon>
        <taxon>Hyphomicrobiales</taxon>
        <taxon>Rhizobiaceae</taxon>
        <taxon>Rhizobium/Agrobacterium group</taxon>
        <taxon>Rhizobium</taxon>
    </lineage>
</organism>
<reference key="1">
    <citation type="journal article" date="2006" name="Proc. Natl. Acad. Sci. U.S.A.">
        <title>The partitioned Rhizobium etli genome: genetic and metabolic redundancy in seven interacting replicons.</title>
        <authorList>
            <person name="Gonzalez V."/>
            <person name="Santamaria R.I."/>
            <person name="Bustos P."/>
            <person name="Hernandez-Gonzalez I."/>
            <person name="Medrano-Soto A."/>
            <person name="Moreno-Hagelsieb G."/>
            <person name="Janga S.C."/>
            <person name="Ramirez M.A."/>
            <person name="Jimenez-Jacinto V."/>
            <person name="Collado-Vides J."/>
            <person name="Davila G."/>
        </authorList>
    </citation>
    <scope>NUCLEOTIDE SEQUENCE [LARGE SCALE GENOMIC DNA]</scope>
    <source>
        <strain>ATCC 51251 / DSM 11541 / JCM 21823 / NBRC 15573 / CFN 42</strain>
    </source>
</reference>
<proteinExistence type="inferred from homology"/>
<dbReference type="EC" id="2.7.7.8" evidence="1"/>
<dbReference type="EMBL" id="CP000133">
    <property type="protein sequence ID" value="ABC88936.1"/>
    <property type="molecule type" value="Genomic_DNA"/>
</dbReference>
<dbReference type="RefSeq" id="WP_011423507.1">
    <property type="nucleotide sequence ID" value="NC_007761.1"/>
</dbReference>
<dbReference type="SMR" id="Q2KE00"/>
<dbReference type="KEGG" id="ret:RHE_CH00111"/>
<dbReference type="eggNOG" id="COG1185">
    <property type="taxonomic scope" value="Bacteria"/>
</dbReference>
<dbReference type="HOGENOM" id="CLU_004217_2_2_5"/>
<dbReference type="OrthoDB" id="9804305at2"/>
<dbReference type="Proteomes" id="UP000001936">
    <property type="component" value="Chromosome"/>
</dbReference>
<dbReference type="GO" id="GO:0005829">
    <property type="term" value="C:cytosol"/>
    <property type="evidence" value="ECO:0007669"/>
    <property type="project" value="TreeGrafter"/>
</dbReference>
<dbReference type="GO" id="GO:0000175">
    <property type="term" value="F:3'-5'-RNA exonuclease activity"/>
    <property type="evidence" value="ECO:0007669"/>
    <property type="project" value="TreeGrafter"/>
</dbReference>
<dbReference type="GO" id="GO:0000287">
    <property type="term" value="F:magnesium ion binding"/>
    <property type="evidence" value="ECO:0007669"/>
    <property type="project" value="UniProtKB-UniRule"/>
</dbReference>
<dbReference type="GO" id="GO:0004654">
    <property type="term" value="F:polyribonucleotide nucleotidyltransferase activity"/>
    <property type="evidence" value="ECO:0007669"/>
    <property type="project" value="UniProtKB-UniRule"/>
</dbReference>
<dbReference type="GO" id="GO:0003723">
    <property type="term" value="F:RNA binding"/>
    <property type="evidence" value="ECO:0007669"/>
    <property type="project" value="UniProtKB-UniRule"/>
</dbReference>
<dbReference type="GO" id="GO:0006402">
    <property type="term" value="P:mRNA catabolic process"/>
    <property type="evidence" value="ECO:0007669"/>
    <property type="project" value="UniProtKB-UniRule"/>
</dbReference>
<dbReference type="GO" id="GO:0006396">
    <property type="term" value="P:RNA processing"/>
    <property type="evidence" value="ECO:0007669"/>
    <property type="project" value="InterPro"/>
</dbReference>
<dbReference type="CDD" id="cd02393">
    <property type="entry name" value="KH-I_PNPase"/>
    <property type="match status" value="1"/>
</dbReference>
<dbReference type="CDD" id="cd11363">
    <property type="entry name" value="RNase_PH_PNPase_1"/>
    <property type="match status" value="1"/>
</dbReference>
<dbReference type="CDD" id="cd11364">
    <property type="entry name" value="RNase_PH_PNPase_2"/>
    <property type="match status" value="1"/>
</dbReference>
<dbReference type="CDD" id="cd04472">
    <property type="entry name" value="S1_PNPase"/>
    <property type="match status" value="1"/>
</dbReference>
<dbReference type="FunFam" id="2.40.50.140:FF:000107">
    <property type="entry name" value="Polyribonucleotide nucleotidyltransferase"/>
    <property type="match status" value="1"/>
</dbReference>
<dbReference type="FunFam" id="3.30.1370.10:FF:000001">
    <property type="entry name" value="Polyribonucleotide nucleotidyltransferase"/>
    <property type="match status" value="1"/>
</dbReference>
<dbReference type="FunFam" id="3.30.230.70:FF:000001">
    <property type="entry name" value="Polyribonucleotide nucleotidyltransferase"/>
    <property type="match status" value="1"/>
</dbReference>
<dbReference type="FunFam" id="3.30.230.70:FF:000002">
    <property type="entry name" value="Polyribonucleotide nucleotidyltransferase"/>
    <property type="match status" value="1"/>
</dbReference>
<dbReference type="Gene3D" id="3.30.230.70">
    <property type="entry name" value="GHMP Kinase, N-terminal domain"/>
    <property type="match status" value="2"/>
</dbReference>
<dbReference type="Gene3D" id="3.30.1370.10">
    <property type="entry name" value="K Homology domain, type 1"/>
    <property type="match status" value="1"/>
</dbReference>
<dbReference type="Gene3D" id="2.40.50.140">
    <property type="entry name" value="Nucleic acid-binding proteins"/>
    <property type="match status" value="1"/>
</dbReference>
<dbReference type="HAMAP" id="MF_01595">
    <property type="entry name" value="PNPase"/>
    <property type="match status" value="1"/>
</dbReference>
<dbReference type="InterPro" id="IPR001247">
    <property type="entry name" value="ExoRNase_PH_dom1"/>
</dbReference>
<dbReference type="InterPro" id="IPR015847">
    <property type="entry name" value="ExoRNase_PH_dom2"/>
</dbReference>
<dbReference type="InterPro" id="IPR036345">
    <property type="entry name" value="ExoRNase_PH_dom2_sf"/>
</dbReference>
<dbReference type="InterPro" id="IPR004087">
    <property type="entry name" value="KH_dom"/>
</dbReference>
<dbReference type="InterPro" id="IPR004088">
    <property type="entry name" value="KH_dom_type_1"/>
</dbReference>
<dbReference type="InterPro" id="IPR036612">
    <property type="entry name" value="KH_dom_type_1_sf"/>
</dbReference>
<dbReference type="InterPro" id="IPR012340">
    <property type="entry name" value="NA-bd_OB-fold"/>
</dbReference>
<dbReference type="InterPro" id="IPR012162">
    <property type="entry name" value="PNPase"/>
</dbReference>
<dbReference type="InterPro" id="IPR027408">
    <property type="entry name" value="PNPase/RNase_PH_dom_sf"/>
</dbReference>
<dbReference type="InterPro" id="IPR015848">
    <property type="entry name" value="PNPase_PH_RNA-bd_bac/org-type"/>
</dbReference>
<dbReference type="InterPro" id="IPR036456">
    <property type="entry name" value="PNPase_PH_RNA-bd_sf"/>
</dbReference>
<dbReference type="InterPro" id="IPR020568">
    <property type="entry name" value="Ribosomal_Su5_D2-typ_SF"/>
</dbReference>
<dbReference type="InterPro" id="IPR003029">
    <property type="entry name" value="S1_domain"/>
</dbReference>
<dbReference type="NCBIfam" id="TIGR03591">
    <property type="entry name" value="polynuc_phos"/>
    <property type="match status" value="1"/>
</dbReference>
<dbReference type="NCBIfam" id="NF008805">
    <property type="entry name" value="PRK11824.1"/>
    <property type="match status" value="1"/>
</dbReference>
<dbReference type="PANTHER" id="PTHR11252">
    <property type="entry name" value="POLYRIBONUCLEOTIDE NUCLEOTIDYLTRANSFERASE"/>
    <property type="match status" value="1"/>
</dbReference>
<dbReference type="PANTHER" id="PTHR11252:SF0">
    <property type="entry name" value="POLYRIBONUCLEOTIDE NUCLEOTIDYLTRANSFERASE 1, MITOCHONDRIAL"/>
    <property type="match status" value="1"/>
</dbReference>
<dbReference type="Pfam" id="PF00013">
    <property type="entry name" value="KH_1"/>
    <property type="match status" value="1"/>
</dbReference>
<dbReference type="Pfam" id="PF03726">
    <property type="entry name" value="PNPase"/>
    <property type="match status" value="1"/>
</dbReference>
<dbReference type="Pfam" id="PF01138">
    <property type="entry name" value="RNase_PH"/>
    <property type="match status" value="2"/>
</dbReference>
<dbReference type="Pfam" id="PF03725">
    <property type="entry name" value="RNase_PH_C"/>
    <property type="match status" value="2"/>
</dbReference>
<dbReference type="Pfam" id="PF00575">
    <property type="entry name" value="S1"/>
    <property type="match status" value="1"/>
</dbReference>
<dbReference type="PIRSF" id="PIRSF005499">
    <property type="entry name" value="PNPase"/>
    <property type="match status" value="1"/>
</dbReference>
<dbReference type="SMART" id="SM00322">
    <property type="entry name" value="KH"/>
    <property type="match status" value="1"/>
</dbReference>
<dbReference type="SMART" id="SM00316">
    <property type="entry name" value="S1"/>
    <property type="match status" value="1"/>
</dbReference>
<dbReference type="SUPFAM" id="SSF54791">
    <property type="entry name" value="Eukaryotic type KH-domain (KH-domain type I)"/>
    <property type="match status" value="1"/>
</dbReference>
<dbReference type="SUPFAM" id="SSF50249">
    <property type="entry name" value="Nucleic acid-binding proteins"/>
    <property type="match status" value="1"/>
</dbReference>
<dbReference type="SUPFAM" id="SSF46915">
    <property type="entry name" value="Polynucleotide phosphorylase/guanosine pentaphosphate synthase (PNPase/GPSI), domain 3"/>
    <property type="match status" value="1"/>
</dbReference>
<dbReference type="SUPFAM" id="SSF55666">
    <property type="entry name" value="Ribonuclease PH domain 2-like"/>
    <property type="match status" value="2"/>
</dbReference>
<dbReference type="SUPFAM" id="SSF54211">
    <property type="entry name" value="Ribosomal protein S5 domain 2-like"/>
    <property type="match status" value="2"/>
</dbReference>
<dbReference type="PROSITE" id="PS50084">
    <property type="entry name" value="KH_TYPE_1"/>
    <property type="match status" value="1"/>
</dbReference>
<dbReference type="PROSITE" id="PS50126">
    <property type="entry name" value="S1"/>
    <property type="match status" value="1"/>
</dbReference>
<protein>
    <recommendedName>
        <fullName evidence="1">Polyribonucleotide nucleotidyltransferase</fullName>
        <ecNumber evidence="1">2.7.7.8</ecNumber>
    </recommendedName>
    <alternativeName>
        <fullName evidence="1">Polynucleotide phosphorylase</fullName>
        <shortName evidence="1">PNPase</shortName>
    </alternativeName>
</protein>
<gene>
    <name evidence="1" type="primary">pnp</name>
    <name type="ordered locus">RHE_CH00111</name>
</gene>
<keyword id="KW-0963">Cytoplasm</keyword>
<keyword id="KW-0460">Magnesium</keyword>
<keyword id="KW-0479">Metal-binding</keyword>
<keyword id="KW-0548">Nucleotidyltransferase</keyword>
<keyword id="KW-1185">Reference proteome</keyword>
<keyword id="KW-0694">RNA-binding</keyword>
<keyword id="KW-0808">Transferase</keyword>
<sequence>MFDTHTVEIEWAGRPLKLETGKIARQADGAVLATYGETVVLATVVSAKAPKPGQDFFPLTVNYQEKTYAAGKIPGGYFKREGRPSENETLVSRLIDRPIRPLFPEGYKNDTQVVVTVVQHDLENNPDILSMIASSAALTLSGVPFMGPVGGARVGYINGEYVLNPHLDEMDESSLDLVVAGTYDAVLMVESEAKELPEDVMLGAVMFGHKGFQPVLDAIIKLAEVAAKEPRDFQPEDYSELEGEMLKHFEAELREAYKITQKADRYAAVDAVKAKVKAHFLPEEGEAKYTAEEVGAIFKHLQAKIVRWNILDTKSRIDGRDLETVRPIVSEVGLLPRTHGSALFTRGETQAIVVATLGTGEDEQYVDSLTGMYKERFLLHYNFPPFSVGETGRMGSPGRREIGHGKLAWRAIRPMLPSAEQFPYTLRVVSEITESNGSSSMATVCGTSLALMDAGVPLAKPVAGIAMGLILEGDRFAVLSDILGDEDHLGDMDFKVAGTADGITSLQMDIKIAGITEEIMKVALGQAKGGRAHILGEMAKAITESRGQLGEFAPRIEVMNIPVDKIREVIGSGGKVIREIVEKTGAKINIEDDGTVKIASSSGKEIEAARKWIHSIVAEPEIGQIYEGTVVKTADFGAFVNFFGARDGLVHISQLASERVAKTTDVVKEGDKVWVKLLGFDERGKVRLSMKVVDQATGQEIPNEKKKEEAAE</sequence>
<feature type="chain" id="PRO_0000329799" description="Polyribonucleotide nucleotidyltransferase">
    <location>
        <begin position="1"/>
        <end position="712"/>
    </location>
</feature>
<feature type="domain" description="KH" evidence="1">
    <location>
        <begin position="554"/>
        <end position="613"/>
    </location>
</feature>
<feature type="domain" description="S1 motif" evidence="1">
    <location>
        <begin position="623"/>
        <end position="691"/>
    </location>
</feature>
<feature type="binding site" evidence="1">
    <location>
        <position position="487"/>
    </location>
    <ligand>
        <name>Mg(2+)</name>
        <dbReference type="ChEBI" id="CHEBI:18420"/>
    </ligand>
</feature>
<feature type="binding site" evidence="1">
    <location>
        <position position="493"/>
    </location>
    <ligand>
        <name>Mg(2+)</name>
        <dbReference type="ChEBI" id="CHEBI:18420"/>
    </ligand>
</feature>